<sequence length="54" mass="6199">MAVPKKKMSKSRRNSRKSNWKKKVLKKVLFALSLGKSFEANTNVNFSFGDKLPQ</sequence>
<name>RK32_EUGGR</name>
<comment type="subcellular location">
    <subcellularLocation>
        <location>Plastid</location>
        <location>Chloroplast</location>
    </subcellularLocation>
</comment>
<comment type="similarity">
    <text evidence="3">Belongs to the bacterial ribosomal protein bL32 family.</text>
</comment>
<feature type="initiator methionine" description="Removed" evidence="1">
    <location>
        <position position="1"/>
    </location>
</feature>
<feature type="chain" id="PRO_0000172456" description="Large ribosomal subunit protein bL32c">
    <location>
        <begin position="2"/>
        <end position="54"/>
    </location>
</feature>
<feature type="region of interest" description="Disordered" evidence="2">
    <location>
        <begin position="1"/>
        <end position="20"/>
    </location>
</feature>
<accession>P31558</accession>
<proteinExistence type="inferred from homology"/>
<keyword id="KW-0150">Chloroplast</keyword>
<keyword id="KW-0934">Plastid</keyword>
<keyword id="KW-0687">Ribonucleoprotein</keyword>
<keyword id="KW-0689">Ribosomal protein</keyword>
<geneLocation type="chloroplast"/>
<protein>
    <recommendedName>
        <fullName evidence="3">Large ribosomal subunit protein bL32c</fullName>
    </recommendedName>
    <alternativeName>
        <fullName>50S ribosomal protein L32, chloroplastic</fullName>
    </alternativeName>
</protein>
<dbReference type="EMBL" id="Z11874">
    <property type="status" value="NOT_ANNOTATED_CDS"/>
    <property type="molecule type" value="Genomic_DNA"/>
</dbReference>
<dbReference type="EMBL" id="X70810">
    <property type="protein sequence ID" value="CAA50122.1"/>
    <property type="molecule type" value="Genomic_DNA"/>
</dbReference>
<dbReference type="PIR" id="S34541">
    <property type="entry name" value="S34541"/>
</dbReference>
<dbReference type="RefSeq" id="NP_041935.1">
    <property type="nucleotide sequence ID" value="NC_001603.2"/>
</dbReference>
<dbReference type="SMR" id="P31558"/>
<dbReference type="GeneID" id="807535"/>
<dbReference type="GO" id="GO:0009507">
    <property type="term" value="C:chloroplast"/>
    <property type="evidence" value="ECO:0007669"/>
    <property type="project" value="UniProtKB-SubCell"/>
</dbReference>
<dbReference type="GO" id="GO:0015934">
    <property type="term" value="C:large ribosomal subunit"/>
    <property type="evidence" value="ECO:0007669"/>
    <property type="project" value="InterPro"/>
</dbReference>
<dbReference type="GO" id="GO:0003735">
    <property type="term" value="F:structural constituent of ribosome"/>
    <property type="evidence" value="ECO:0007669"/>
    <property type="project" value="InterPro"/>
</dbReference>
<dbReference type="GO" id="GO:0006412">
    <property type="term" value="P:translation"/>
    <property type="evidence" value="ECO:0007669"/>
    <property type="project" value="UniProtKB-UniRule"/>
</dbReference>
<dbReference type="HAMAP" id="MF_00340">
    <property type="entry name" value="Ribosomal_bL32"/>
    <property type="match status" value="1"/>
</dbReference>
<dbReference type="InterPro" id="IPR002677">
    <property type="entry name" value="Ribosomal_bL32"/>
</dbReference>
<dbReference type="InterPro" id="IPR011332">
    <property type="entry name" value="Ribosomal_zn-bd"/>
</dbReference>
<dbReference type="NCBIfam" id="TIGR01031">
    <property type="entry name" value="rpmF_bact"/>
    <property type="match status" value="1"/>
</dbReference>
<dbReference type="Pfam" id="PF01783">
    <property type="entry name" value="Ribosomal_L32p"/>
    <property type="match status" value="1"/>
</dbReference>
<dbReference type="SUPFAM" id="SSF57829">
    <property type="entry name" value="Zn-binding ribosomal proteins"/>
    <property type="match status" value="1"/>
</dbReference>
<reference key="1">
    <citation type="journal article" date="1993" name="Nucleic Acids Res.">
        <title>Complete sequence of Euglena gracilis chloroplast DNA.</title>
        <authorList>
            <person name="Hallick R.B."/>
            <person name="Hong L."/>
            <person name="Drager R.G."/>
            <person name="Favreau M.R."/>
            <person name="Monfort A."/>
            <person name="Orsat B."/>
            <person name="Spielmann A."/>
            <person name="Stutz E."/>
        </authorList>
    </citation>
    <scope>NUCLEOTIDE SEQUENCE [LARGE SCALE GENOMIC DNA]</scope>
    <source>
        <strain>Z / UTEX 753</strain>
    </source>
</reference>
<gene>
    <name type="primary">rpl32</name>
</gene>
<evidence type="ECO:0000250" key="1"/>
<evidence type="ECO:0000256" key="2">
    <source>
        <dbReference type="SAM" id="MobiDB-lite"/>
    </source>
</evidence>
<evidence type="ECO:0000305" key="3"/>
<organism>
    <name type="scientific">Euglena gracilis</name>
    <dbReference type="NCBI Taxonomy" id="3039"/>
    <lineage>
        <taxon>Eukaryota</taxon>
        <taxon>Discoba</taxon>
        <taxon>Euglenozoa</taxon>
        <taxon>Euglenida</taxon>
        <taxon>Spirocuta</taxon>
        <taxon>Euglenophyceae</taxon>
        <taxon>Euglenales</taxon>
        <taxon>Euglenaceae</taxon>
        <taxon>Euglena</taxon>
    </lineage>
</organism>